<name>FYV10_DEBHA</name>
<keyword id="KW-0963">Cytoplasm</keyword>
<keyword id="KW-0479">Metal-binding</keyword>
<keyword id="KW-0539">Nucleus</keyword>
<keyword id="KW-1185">Reference proteome</keyword>
<keyword id="KW-0862">Zinc</keyword>
<keyword id="KW-0863">Zinc-finger</keyword>
<comment type="function">
    <text evidence="1">Involved in the proteasome-dependent degradation of fructose-1,6-bisphosphatase.</text>
</comment>
<comment type="subcellular location">
    <subcellularLocation>
        <location evidence="1">Cytoplasm</location>
    </subcellularLocation>
    <subcellularLocation>
        <location evidence="1">Nucleus</location>
    </subcellularLocation>
</comment>
<comment type="similarity">
    <text evidence="5">Belongs to the FYV10 family.</text>
</comment>
<protein>
    <recommendedName>
        <fullName>Protein FYV10</fullName>
    </recommendedName>
</protein>
<evidence type="ECO:0000250" key="1"/>
<evidence type="ECO:0000255" key="2">
    <source>
        <dbReference type="PROSITE-ProRule" id="PRU00058"/>
    </source>
</evidence>
<evidence type="ECO:0000255" key="3">
    <source>
        <dbReference type="PROSITE-ProRule" id="PRU01215"/>
    </source>
</evidence>
<evidence type="ECO:0000256" key="4">
    <source>
        <dbReference type="SAM" id="MobiDB-lite"/>
    </source>
</evidence>
<evidence type="ECO:0000305" key="5"/>
<reference key="1">
    <citation type="journal article" date="2004" name="Nature">
        <title>Genome evolution in yeasts.</title>
        <authorList>
            <person name="Dujon B."/>
            <person name="Sherman D."/>
            <person name="Fischer G."/>
            <person name="Durrens P."/>
            <person name="Casaregola S."/>
            <person name="Lafontaine I."/>
            <person name="de Montigny J."/>
            <person name="Marck C."/>
            <person name="Neuveglise C."/>
            <person name="Talla E."/>
            <person name="Goffard N."/>
            <person name="Frangeul L."/>
            <person name="Aigle M."/>
            <person name="Anthouard V."/>
            <person name="Babour A."/>
            <person name="Barbe V."/>
            <person name="Barnay S."/>
            <person name="Blanchin S."/>
            <person name="Beckerich J.-M."/>
            <person name="Beyne E."/>
            <person name="Bleykasten C."/>
            <person name="Boisrame A."/>
            <person name="Boyer J."/>
            <person name="Cattolico L."/>
            <person name="Confanioleri F."/>
            <person name="de Daruvar A."/>
            <person name="Despons L."/>
            <person name="Fabre E."/>
            <person name="Fairhead C."/>
            <person name="Ferry-Dumazet H."/>
            <person name="Groppi A."/>
            <person name="Hantraye F."/>
            <person name="Hennequin C."/>
            <person name="Jauniaux N."/>
            <person name="Joyet P."/>
            <person name="Kachouri R."/>
            <person name="Kerrest A."/>
            <person name="Koszul R."/>
            <person name="Lemaire M."/>
            <person name="Lesur I."/>
            <person name="Ma L."/>
            <person name="Muller H."/>
            <person name="Nicaud J.-M."/>
            <person name="Nikolski M."/>
            <person name="Oztas S."/>
            <person name="Ozier-Kalogeropoulos O."/>
            <person name="Pellenz S."/>
            <person name="Potier S."/>
            <person name="Richard G.-F."/>
            <person name="Straub M.-L."/>
            <person name="Suleau A."/>
            <person name="Swennen D."/>
            <person name="Tekaia F."/>
            <person name="Wesolowski-Louvel M."/>
            <person name="Westhof E."/>
            <person name="Wirth B."/>
            <person name="Zeniou-Meyer M."/>
            <person name="Zivanovic Y."/>
            <person name="Bolotin-Fukuhara M."/>
            <person name="Thierry A."/>
            <person name="Bouchier C."/>
            <person name="Caudron B."/>
            <person name="Scarpelli C."/>
            <person name="Gaillardin C."/>
            <person name="Weissenbach J."/>
            <person name="Wincker P."/>
            <person name="Souciet J.-L."/>
        </authorList>
    </citation>
    <scope>NUCLEOTIDE SEQUENCE [LARGE SCALE GENOMIC DNA]</scope>
    <source>
        <strain>ATCC 36239 / CBS 767 / BCRC 21394 / JCM 1990 / NBRC 0083 / IGC 2968</strain>
    </source>
</reference>
<accession>Q6BYF0</accession>
<dbReference type="EMBL" id="CR382133">
    <property type="protein sequence ID" value="CAG84732.2"/>
    <property type="molecule type" value="Genomic_DNA"/>
</dbReference>
<dbReference type="RefSeq" id="XP_456769.2">
    <property type="nucleotide sequence ID" value="XM_456769.1"/>
</dbReference>
<dbReference type="SMR" id="Q6BYF0"/>
<dbReference type="FunCoup" id="Q6BYF0">
    <property type="interactions" value="948"/>
</dbReference>
<dbReference type="STRING" id="284592.Q6BYF0"/>
<dbReference type="GeneID" id="2899592"/>
<dbReference type="KEGG" id="dha:DEHA2A10076g"/>
<dbReference type="VEuPathDB" id="FungiDB:DEHA2A10076g"/>
<dbReference type="eggNOG" id="KOG0396">
    <property type="taxonomic scope" value="Eukaryota"/>
</dbReference>
<dbReference type="HOGENOM" id="CLU_027445_2_0_1"/>
<dbReference type="InParanoid" id="Q6BYF0"/>
<dbReference type="OMA" id="ANHETAR"/>
<dbReference type="OrthoDB" id="1933455at2759"/>
<dbReference type="Proteomes" id="UP000000599">
    <property type="component" value="Chromosome A"/>
</dbReference>
<dbReference type="GO" id="GO:0005737">
    <property type="term" value="C:cytoplasm"/>
    <property type="evidence" value="ECO:0007669"/>
    <property type="project" value="UniProtKB-SubCell"/>
</dbReference>
<dbReference type="GO" id="GO:0034657">
    <property type="term" value="C:GID complex"/>
    <property type="evidence" value="ECO:0007669"/>
    <property type="project" value="TreeGrafter"/>
</dbReference>
<dbReference type="GO" id="GO:0005634">
    <property type="term" value="C:nucleus"/>
    <property type="evidence" value="ECO:0007669"/>
    <property type="project" value="UniProtKB-SubCell"/>
</dbReference>
<dbReference type="GO" id="GO:0061630">
    <property type="term" value="F:ubiquitin protein ligase activity"/>
    <property type="evidence" value="ECO:0007669"/>
    <property type="project" value="InterPro"/>
</dbReference>
<dbReference type="GO" id="GO:0008270">
    <property type="term" value="F:zinc ion binding"/>
    <property type="evidence" value="ECO:0007669"/>
    <property type="project" value="UniProtKB-KW"/>
</dbReference>
<dbReference type="GO" id="GO:0045721">
    <property type="term" value="P:negative regulation of gluconeogenesis"/>
    <property type="evidence" value="ECO:0007669"/>
    <property type="project" value="UniProtKB-ARBA"/>
</dbReference>
<dbReference type="GO" id="GO:0043161">
    <property type="term" value="P:proteasome-mediated ubiquitin-dependent protein catabolic process"/>
    <property type="evidence" value="ECO:0007669"/>
    <property type="project" value="InterPro"/>
</dbReference>
<dbReference type="InterPro" id="IPR013144">
    <property type="entry name" value="CRA_dom"/>
</dbReference>
<dbReference type="InterPro" id="IPR024964">
    <property type="entry name" value="CTLH/CRA"/>
</dbReference>
<dbReference type="InterPro" id="IPR006595">
    <property type="entry name" value="CTLH_C"/>
</dbReference>
<dbReference type="InterPro" id="IPR045098">
    <property type="entry name" value="Fyv10_fam"/>
</dbReference>
<dbReference type="InterPro" id="IPR044063">
    <property type="entry name" value="ZF_RING_GID"/>
</dbReference>
<dbReference type="PANTHER" id="PTHR12170:SF2">
    <property type="entry name" value="E3 UBIQUITIN-PROTEIN TRANSFERASE MAEA"/>
    <property type="match status" value="1"/>
</dbReference>
<dbReference type="PANTHER" id="PTHR12170">
    <property type="entry name" value="MACROPHAGE ERYTHROBLAST ATTACHER-RELATED"/>
    <property type="match status" value="1"/>
</dbReference>
<dbReference type="Pfam" id="PF10607">
    <property type="entry name" value="CTLH"/>
    <property type="match status" value="1"/>
</dbReference>
<dbReference type="SMART" id="SM00757">
    <property type="entry name" value="CRA"/>
    <property type="match status" value="1"/>
</dbReference>
<dbReference type="PROSITE" id="PS50897">
    <property type="entry name" value="CTLH"/>
    <property type="match status" value="1"/>
</dbReference>
<dbReference type="PROSITE" id="PS51867">
    <property type="entry name" value="ZF_RING_GID"/>
    <property type="match status" value="1"/>
</dbReference>
<organism>
    <name type="scientific">Debaryomyces hansenii (strain ATCC 36239 / CBS 767 / BCRC 21394 / JCM 1990 / NBRC 0083 / IGC 2968)</name>
    <name type="common">Yeast</name>
    <name type="synonym">Torulaspora hansenii</name>
    <dbReference type="NCBI Taxonomy" id="284592"/>
    <lineage>
        <taxon>Eukaryota</taxon>
        <taxon>Fungi</taxon>
        <taxon>Dikarya</taxon>
        <taxon>Ascomycota</taxon>
        <taxon>Saccharomycotina</taxon>
        <taxon>Pichiomycetes</taxon>
        <taxon>Debaryomycetaceae</taxon>
        <taxon>Debaryomyces</taxon>
    </lineage>
</organism>
<gene>
    <name type="primary">FYV10</name>
    <name type="ordered locus">DEHA2A10076g</name>
</gene>
<feature type="chain" id="PRO_0000292458" description="Protein FYV10">
    <location>
        <begin position="1"/>
        <end position="511"/>
    </location>
</feature>
<feature type="domain" description="CTLH" evidence="2">
    <location>
        <begin position="200"/>
        <end position="258"/>
    </location>
</feature>
<feature type="zinc finger region" description="RING-Gid-type" evidence="3">
    <location>
        <begin position="430"/>
        <end position="496"/>
    </location>
</feature>
<feature type="region of interest" description="Disordered" evidence="4">
    <location>
        <begin position="117"/>
        <end position="140"/>
    </location>
</feature>
<sequence>MSEPTVNFHIQTRLTEFKIPTELIKKNFKAVQKQIEKQKKSIGEDVAKVKKNNKLPTAMKIEMINKLIKSFEIFQKRLRTSINRDEVFRSRIIARLENLSELANYTVKTNVVLESNASPIDSDDNRDESSVTPKSMEDEDRPLDLHNVNLINWYRDQTNLLIIDYLIKSNTRSDQNIGLQLLKSISQTNPKFTKLIDYDLYDNFNKVFVSIIENHDLSLVIAWFNENRSFLKKANSNLEFEINYCKFLSLIEEGDVNEAIKFSQVNLSPYGNKGNYQSQEFMNHESNLNKLKEIGGLLVYMAINEKANAQIDKSIPFSSSLVINSPRFKEYKKLLSNERWDSLSQCFIENFTKLYGISRNYPLFIYLSAGLSSLKTKSCYCNTENTIFKQYEESSESNKNIYKKDLAVLTDKKYRGPNKYYKLLNKINHCPVCSPELYKLSKNLPYAQLITSIFNNPFKLPNGNIYPFDKLLNPSEKYLSEKNTLLRMGKIKDPLTREIFLIDDCVRVYPA</sequence>
<proteinExistence type="inferred from homology"/>